<name>RL34_METPB</name>
<dbReference type="EMBL" id="CP001029">
    <property type="protein sequence ID" value="ACB80472.1"/>
    <property type="molecule type" value="Genomic_DNA"/>
</dbReference>
<dbReference type="RefSeq" id="WP_012253788.1">
    <property type="nucleotide sequence ID" value="NC_010725.1"/>
</dbReference>
<dbReference type="SMR" id="B1Z8E9"/>
<dbReference type="STRING" id="441620.Mpop_2310"/>
<dbReference type="GeneID" id="72990038"/>
<dbReference type="KEGG" id="mpo:Mpop_2310"/>
<dbReference type="eggNOG" id="COG0230">
    <property type="taxonomic scope" value="Bacteria"/>
</dbReference>
<dbReference type="HOGENOM" id="CLU_129938_2_0_5"/>
<dbReference type="OrthoDB" id="9804164at2"/>
<dbReference type="Proteomes" id="UP000007136">
    <property type="component" value="Chromosome"/>
</dbReference>
<dbReference type="GO" id="GO:1990904">
    <property type="term" value="C:ribonucleoprotein complex"/>
    <property type="evidence" value="ECO:0007669"/>
    <property type="project" value="UniProtKB-KW"/>
</dbReference>
<dbReference type="GO" id="GO:0005840">
    <property type="term" value="C:ribosome"/>
    <property type="evidence" value="ECO:0007669"/>
    <property type="project" value="UniProtKB-KW"/>
</dbReference>
<dbReference type="GO" id="GO:0003735">
    <property type="term" value="F:structural constituent of ribosome"/>
    <property type="evidence" value="ECO:0007669"/>
    <property type="project" value="InterPro"/>
</dbReference>
<dbReference type="GO" id="GO:0006412">
    <property type="term" value="P:translation"/>
    <property type="evidence" value="ECO:0007669"/>
    <property type="project" value="UniProtKB-UniRule"/>
</dbReference>
<dbReference type="FunFam" id="1.10.287.3980:FF:000001">
    <property type="entry name" value="Mitochondrial ribosomal protein L34"/>
    <property type="match status" value="1"/>
</dbReference>
<dbReference type="Gene3D" id="1.10.287.3980">
    <property type="match status" value="1"/>
</dbReference>
<dbReference type="HAMAP" id="MF_00391">
    <property type="entry name" value="Ribosomal_bL34"/>
    <property type="match status" value="1"/>
</dbReference>
<dbReference type="InterPro" id="IPR000271">
    <property type="entry name" value="Ribosomal_bL34"/>
</dbReference>
<dbReference type="InterPro" id="IPR020939">
    <property type="entry name" value="Ribosomal_bL34_CS"/>
</dbReference>
<dbReference type="NCBIfam" id="TIGR01030">
    <property type="entry name" value="rpmH_bact"/>
    <property type="match status" value="1"/>
</dbReference>
<dbReference type="PANTHER" id="PTHR14503:SF4">
    <property type="entry name" value="LARGE RIBOSOMAL SUBUNIT PROTEIN BL34M"/>
    <property type="match status" value="1"/>
</dbReference>
<dbReference type="PANTHER" id="PTHR14503">
    <property type="entry name" value="MITOCHONDRIAL RIBOSOMAL PROTEIN 34 FAMILY MEMBER"/>
    <property type="match status" value="1"/>
</dbReference>
<dbReference type="Pfam" id="PF00468">
    <property type="entry name" value="Ribosomal_L34"/>
    <property type="match status" value="1"/>
</dbReference>
<dbReference type="PROSITE" id="PS00784">
    <property type="entry name" value="RIBOSOMAL_L34"/>
    <property type="match status" value="1"/>
</dbReference>
<gene>
    <name evidence="1" type="primary">rpmH</name>
    <name type="ordered locus">Mpop_2310</name>
</gene>
<proteinExistence type="inferred from homology"/>
<sequence length="44" mass="5089">MKRTYQPSKLVRKRRHGFRARMATAGGRKVIAARRAHGRKRLSA</sequence>
<evidence type="ECO:0000255" key="1">
    <source>
        <dbReference type="HAMAP-Rule" id="MF_00391"/>
    </source>
</evidence>
<evidence type="ECO:0000305" key="2"/>
<reference key="1">
    <citation type="submission" date="2008-04" db="EMBL/GenBank/DDBJ databases">
        <title>Complete sequence of chromosome of Methylobacterium populi BJ001.</title>
        <authorList>
            <consortium name="US DOE Joint Genome Institute"/>
            <person name="Copeland A."/>
            <person name="Lucas S."/>
            <person name="Lapidus A."/>
            <person name="Glavina del Rio T."/>
            <person name="Dalin E."/>
            <person name="Tice H."/>
            <person name="Bruce D."/>
            <person name="Goodwin L."/>
            <person name="Pitluck S."/>
            <person name="Chertkov O."/>
            <person name="Brettin T."/>
            <person name="Detter J.C."/>
            <person name="Han C."/>
            <person name="Kuske C.R."/>
            <person name="Schmutz J."/>
            <person name="Larimer F."/>
            <person name="Land M."/>
            <person name="Hauser L."/>
            <person name="Kyrpides N."/>
            <person name="Mikhailova N."/>
            <person name="Marx C."/>
            <person name="Richardson P."/>
        </authorList>
    </citation>
    <scope>NUCLEOTIDE SEQUENCE [LARGE SCALE GENOMIC DNA]</scope>
    <source>
        <strain>ATCC BAA-705 / NCIMB 13946 / BJ001</strain>
    </source>
</reference>
<protein>
    <recommendedName>
        <fullName evidence="1">Large ribosomal subunit protein bL34</fullName>
    </recommendedName>
    <alternativeName>
        <fullName evidence="2">50S ribosomal protein L34</fullName>
    </alternativeName>
</protein>
<accession>B1Z8E9</accession>
<keyword id="KW-0687">Ribonucleoprotein</keyword>
<keyword id="KW-0689">Ribosomal protein</keyword>
<organism>
    <name type="scientific">Methylorubrum populi (strain ATCC BAA-705 / NCIMB 13946 / BJ001)</name>
    <name type="common">Methylobacterium populi</name>
    <dbReference type="NCBI Taxonomy" id="441620"/>
    <lineage>
        <taxon>Bacteria</taxon>
        <taxon>Pseudomonadati</taxon>
        <taxon>Pseudomonadota</taxon>
        <taxon>Alphaproteobacteria</taxon>
        <taxon>Hyphomicrobiales</taxon>
        <taxon>Methylobacteriaceae</taxon>
        <taxon>Methylorubrum</taxon>
    </lineage>
</organism>
<comment type="similarity">
    <text evidence="1">Belongs to the bacterial ribosomal protein bL34 family.</text>
</comment>
<feature type="chain" id="PRO_1000196067" description="Large ribosomal subunit protein bL34">
    <location>
        <begin position="1"/>
        <end position="44"/>
    </location>
</feature>